<accession>P0DMB3</accession>
<reference key="1">
    <citation type="journal article" date="2013" name="Peptides">
        <title>Unraveling the peptidome of the South African cone snails Conus pictus and Conus natalis.</title>
        <authorList>
            <person name="Peigneur S."/>
            <person name="Van Der Haegen A."/>
            <person name="Moller C."/>
            <person name="Waelkens E."/>
            <person name="Diego-Garcia E."/>
            <person name="Mari F."/>
            <person name="Naude R."/>
            <person name="Tytgat J."/>
        </authorList>
    </citation>
    <scope>PROTEIN SEQUENCE</scope>
    <scope>SUBCELLULAR LOCATION</scope>
    <scope>MASS SPECTROMETRY</scope>
    <source>
        <tissue>Venom</tissue>
    </source>
</reference>
<name>CU3A_CONNA</name>
<comment type="subcellular location">
    <subcellularLocation>
        <location evidence="2">Secreted</location>
    </subcellularLocation>
</comment>
<comment type="tissue specificity">
    <text evidence="5">Expressed by the venom duct.</text>
</comment>
<comment type="domain">
    <text evidence="4">The cysteine framework is III (CC-C-C-CC). Classified in the M-3 branch, since 3 residues stand between the fourth and the fifth cysteine residues.</text>
</comment>
<comment type="mass spectrometry" mass="1742.7" method="Electrospray" evidence="2">
    <text>monoisotopic mass.</text>
</comment>
<comment type="similarity">
    <text evidence="4">Belongs to the conotoxin M superfamily.</text>
</comment>
<keyword id="KW-0903">Direct protein sequencing</keyword>
<keyword id="KW-1015">Disulfide bond</keyword>
<keyword id="KW-0964">Secreted</keyword>
<keyword id="KW-0800">Toxin</keyword>
<protein>
    <recommendedName>
        <fullName evidence="3">Conotoxin nt3a</fullName>
    </recommendedName>
</protein>
<evidence type="ECO:0000250" key="1"/>
<evidence type="ECO:0000269" key="2">
    <source>
    </source>
</evidence>
<evidence type="ECO:0000303" key="3">
    <source>
    </source>
</evidence>
<evidence type="ECO:0000305" key="4"/>
<evidence type="ECO:0000305" key="5">
    <source>
    </source>
</evidence>
<proteinExistence type="evidence at protein level"/>
<sequence length="16" mass="1750">GCCRFPCPDSCRSLCC</sequence>
<organism>
    <name type="scientific">Conus natalis</name>
    <name type="common">Natal textile cone</name>
    <dbReference type="NCBI Taxonomy" id="257336"/>
    <lineage>
        <taxon>Eukaryota</taxon>
        <taxon>Metazoa</taxon>
        <taxon>Spiralia</taxon>
        <taxon>Lophotrochozoa</taxon>
        <taxon>Mollusca</taxon>
        <taxon>Gastropoda</taxon>
        <taxon>Caenogastropoda</taxon>
        <taxon>Neogastropoda</taxon>
        <taxon>Conoidea</taxon>
        <taxon>Conidae</taxon>
        <taxon>Conus</taxon>
        <taxon>Leptoconus</taxon>
    </lineage>
</organism>
<dbReference type="ConoServer" id="5859">
    <property type="toxin name" value="Nt3a"/>
</dbReference>
<dbReference type="GO" id="GO:0005576">
    <property type="term" value="C:extracellular region"/>
    <property type="evidence" value="ECO:0007669"/>
    <property type="project" value="UniProtKB-SubCell"/>
</dbReference>
<dbReference type="GO" id="GO:0090729">
    <property type="term" value="F:toxin activity"/>
    <property type="evidence" value="ECO:0007669"/>
    <property type="project" value="UniProtKB-KW"/>
</dbReference>
<feature type="peptide" id="PRO_0000425158" description="Conotoxin nt3a" evidence="2">
    <location>
        <begin position="1"/>
        <end position="16"/>
    </location>
</feature>
<feature type="disulfide bond" evidence="1">
    <location>
        <begin position="2"/>
        <end position="11"/>
    </location>
</feature>
<feature type="disulfide bond" evidence="1">
    <location>
        <begin position="3"/>
        <end position="15"/>
    </location>
</feature>
<feature type="disulfide bond" evidence="1">
    <location>
        <begin position="7"/>
        <end position="16"/>
    </location>
</feature>